<organism>
    <name type="scientific">Arabidopsis thaliana</name>
    <name type="common">Mouse-ear cress</name>
    <dbReference type="NCBI Taxonomy" id="3702"/>
    <lineage>
        <taxon>Eukaryota</taxon>
        <taxon>Viridiplantae</taxon>
        <taxon>Streptophyta</taxon>
        <taxon>Embryophyta</taxon>
        <taxon>Tracheophyta</taxon>
        <taxon>Spermatophyta</taxon>
        <taxon>Magnoliopsida</taxon>
        <taxon>eudicotyledons</taxon>
        <taxon>Gunneridae</taxon>
        <taxon>Pentapetalae</taxon>
        <taxon>rosids</taxon>
        <taxon>malvids</taxon>
        <taxon>Brassicales</taxon>
        <taxon>Brassicaceae</taxon>
        <taxon>Camelineae</taxon>
        <taxon>Arabidopsis</taxon>
    </lineage>
</organism>
<comment type="function">
    <text evidence="2">Required for the biogenesis and accumulation of native cytochrome b6 in the thylakoid membrane. Controls the conversion of apocytochrome b6 to holocytochrome b6. Required for covalent binding of the c-type heme to cytochrome b6.</text>
</comment>
<comment type="subcellular location">
    <subcellularLocation>
        <location evidence="5">Plastid</location>
        <location evidence="5">Chloroplast thylakoid membrane</location>
        <topology evidence="1">Multi-pass membrane protein</topology>
    </subcellularLocation>
</comment>
<comment type="disruption phenotype">
    <text evidence="2">Seedling lethal when grown on soil. On agar plates supplied with sucrose, seedlings grow very slowly with a chlorotic phenotype. Deficiency in the accumulation of the subunits of the cytochrome b6f complex and lack of covalent heme binding to cytochrome b6.</text>
</comment>
<comment type="sequence caution" evidence="4">
    <conflict type="erroneous gene model prediction">
        <sequence resource="EMBL-CDS" id="AAD39336"/>
    </conflict>
</comment>
<sequence length="297" mass="32222">MEARIILLRIQIPWSANRQFSHPPLDFPRFIRASSSSTSQKPKTYEGPKPRKNLVADFISKNDDLVRSLPIYVGGASLLAVLFNRTVSGIAPVADASSSQSRADLLALGLAVTNLLTGLVWLSIRPKSITPVNPKGVECKVVESDLPASMVSELLWAWESLKVATCCKSLVIVYNGICLIQIGMVAESPEDKKTVIVKTDKLMQGSVYRGVMKSKAQSYLANLSLYPGRSELPFLPANTQAVILQPLGDKGIAVIGGNTIRGFTSSDQAWISSIGEKLDATLGRYFVDSDEISRVTV</sequence>
<accession>Q6NQK9</accession>
<accession>Q9XIE5</accession>
<gene>
    <name evidence="3" type="primary">CCB4</name>
    <name evidence="6" type="ordered locus">At1g59840</name>
    <name evidence="7" type="ORF">F23H11.16</name>
</gene>
<proteinExistence type="evidence at protein level"/>
<evidence type="ECO:0000255" key="1"/>
<evidence type="ECO:0000269" key="2">
    <source>
    </source>
</evidence>
<evidence type="ECO:0000303" key="3">
    <source>
    </source>
</evidence>
<evidence type="ECO:0000305" key="4"/>
<evidence type="ECO:0000305" key="5">
    <source>
    </source>
</evidence>
<evidence type="ECO:0000312" key="6">
    <source>
        <dbReference type="Araport" id="AT1G59840"/>
    </source>
</evidence>
<evidence type="ECO:0000312" key="7">
    <source>
        <dbReference type="EMBL" id="AAD39336.1"/>
    </source>
</evidence>
<name>CCB4_ARATH</name>
<keyword id="KW-0150">Chloroplast</keyword>
<keyword id="KW-0472">Membrane</keyword>
<keyword id="KW-0934">Plastid</keyword>
<keyword id="KW-1185">Reference proteome</keyword>
<keyword id="KW-0793">Thylakoid</keyword>
<keyword id="KW-0809">Transit peptide</keyword>
<keyword id="KW-0812">Transmembrane</keyword>
<keyword id="KW-1133">Transmembrane helix</keyword>
<reference key="1">
    <citation type="journal article" date="2000" name="Nature">
        <title>Sequence and analysis of chromosome 1 of the plant Arabidopsis thaliana.</title>
        <authorList>
            <person name="Theologis A."/>
            <person name="Ecker J.R."/>
            <person name="Palm C.J."/>
            <person name="Federspiel N.A."/>
            <person name="Kaul S."/>
            <person name="White O."/>
            <person name="Alonso J."/>
            <person name="Altafi H."/>
            <person name="Araujo R."/>
            <person name="Bowman C.L."/>
            <person name="Brooks S.Y."/>
            <person name="Buehler E."/>
            <person name="Chan A."/>
            <person name="Chao Q."/>
            <person name="Chen H."/>
            <person name="Cheuk R.F."/>
            <person name="Chin C.W."/>
            <person name="Chung M.K."/>
            <person name="Conn L."/>
            <person name="Conway A.B."/>
            <person name="Conway A.R."/>
            <person name="Creasy T.H."/>
            <person name="Dewar K."/>
            <person name="Dunn P."/>
            <person name="Etgu P."/>
            <person name="Feldblyum T.V."/>
            <person name="Feng J.-D."/>
            <person name="Fong B."/>
            <person name="Fujii C.Y."/>
            <person name="Gill J.E."/>
            <person name="Goldsmith A.D."/>
            <person name="Haas B."/>
            <person name="Hansen N.F."/>
            <person name="Hughes B."/>
            <person name="Huizar L."/>
            <person name="Hunter J.L."/>
            <person name="Jenkins J."/>
            <person name="Johnson-Hopson C."/>
            <person name="Khan S."/>
            <person name="Khaykin E."/>
            <person name="Kim C.J."/>
            <person name="Koo H.L."/>
            <person name="Kremenetskaia I."/>
            <person name="Kurtz D.B."/>
            <person name="Kwan A."/>
            <person name="Lam B."/>
            <person name="Langin-Hooper S."/>
            <person name="Lee A."/>
            <person name="Lee J.M."/>
            <person name="Lenz C.A."/>
            <person name="Li J.H."/>
            <person name="Li Y.-P."/>
            <person name="Lin X."/>
            <person name="Liu S.X."/>
            <person name="Liu Z.A."/>
            <person name="Luros J.S."/>
            <person name="Maiti R."/>
            <person name="Marziali A."/>
            <person name="Militscher J."/>
            <person name="Miranda M."/>
            <person name="Nguyen M."/>
            <person name="Nierman W.C."/>
            <person name="Osborne B.I."/>
            <person name="Pai G."/>
            <person name="Peterson J."/>
            <person name="Pham P.K."/>
            <person name="Rizzo M."/>
            <person name="Rooney T."/>
            <person name="Rowley D."/>
            <person name="Sakano H."/>
            <person name="Salzberg S.L."/>
            <person name="Schwartz J.R."/>
            <person name="Shinn P."/>
            <person name="Southwick A.M."/>
            <person name="Sun H."/>
            <person name="Tallon L.J."/>
            <person name="Tambunga G."/>
            <person name="Toriumi M.J."/>
            <person name="Town C.D."/>
            <person name="Utterback T."/>
            <person name="Van Aken S."/>
            <person name="Vaysberg M."/>
            <person name="Vysotskaia V.S."/>
            <person name="Walker M."/>
            <person name="Wu D."/>
            <person name="Yu G."/>
            <person name="Fraser C.M."/>
            <person name="Venter J.C."/>
            <person name="Davis R.W."/>
        </authorList>
    </citation>
    <scope>NUCLEOTIDE SEQUENCE [LARGE SCALE GENOMIC DNA]</scope>
    <source>
        <strain>cv. Columbia</strain>
    </source>
</reference>
<reference key="2">
    <citation type="journal article" date="2017" name="Plant J.">
        <title>Araport11: a complete reannotation of the Arabidopsis thaliana reference genome.</title>
        <authorList>
            <person name="Cheng C.Y."/>
            <person name="Krishnakumar V."/>
            <person name="Chan A.P."/>
            <person name="Thibaud-Nissen F."/>
            <person name="Schobel S."/>
            <person name="Town C.D."/>
        </authorList>
    </citation>
    <scope>GENOME REANNOTATION</scope>
    <source>
        <strain>cv. Columbia</strain>
    </source>
</reference>
<reference key="3">
    <citation type="journal article" date="2003" name="Science">
        <title>Empirical analysis of transcriptional activity in the Arabidopsis genome.</title>
        <authorList>
            <person name="Yamada K."/>
            <person name="Lim J."/>
            <person name="Dale J.M."/>
            <person name="Chen H."/>
            <person name="Shinn P."/>
            <person name="Palm C.J."/>
            <person name="Southwick A.M."/>
            <person name="Wu H.C."/>
            <person name="Kim C.J."/>
            <person name="Nguyen M."/>
            <person name="Pham P.K."/>
            <person name="Cheuk R.F."/>
            <person name="Karlin-Newmann G."/>
            <person name="Liu S.X."/>
            <person name="Lam B."/>
            <person name="Sakano H."/>
            <person name="Wu T."/>
            <person name="Yu G."/>
            <person name="Miranda M."/>
            <person name="Quach H.L."/>
            <person name="Tripp M."/>
            <person name="Chang C.H."/>
            <person name="Lee J.M."/>
            <person name="Toriumi M.J."/>
            <person name="Chan M.M."/>
            <person name="Tang C.C."/>
            <person name="Onodera C.S."/>
            <person name="Deng J.M."/>
            <person name="Akiyama K."/>
            <person name="Ansari Y."/>
            <person name="Arakawa T."/>
            <person name="Banh J."/>
            <person name="Banno F."/>
            <person name="Bowser L."/>
            <person name="Brooks S.Y."/>
            <person name="Carninci P."/>
            <person name="Chao Q."/>
            <person name="Choy N."/>
            <person name="Enju A."/>
            <person name="Goldsmith A.D."/>
            <person name="Gurjal M."/>
            <person name="Hansen N.F."/>
            <person name="Hayashizaki Y."/>
            <person name="Johnson-Hopson C."/>
            <person name="Hsuan V.W."/>
            <person name="Iida K."/>
            <person name="Karnes M."/>
            <person name="Khan S."/>
            <person name="Koesema E."/>
            <person name="Ishida J."/>
            <person name="Jiang P.X."/>
            <person name="Jones T."/>
            <person name="Kawai J."/>
            <person name="Kamiya A."/>
            <person name="Meyers C."/>
            <person name="Nakajima M."/>
            <person name="Narusaka M."/>
            <person name="Seki M."/>
            <person name="Sakurai T."/>
            <person name="Satou M."/>
            <person name="Tamse R."/>
            <person name="Vaysberg M."/>
            <person name="Wallender E.K."/>
            <person name="Wong C."/>
            <person name="Yamamura Y."/>
            <person name="Yuan S."/>
            <person name="Shinozaki K."/>
            <person name="Davis R.W."/>
            <person name="Theologis A."/>
            <person name="Ecker J.R."/>
        </authorList>
    </citation>
    <scope>NUCLEOTIDE SEQUENCE [LARGE SCALE MRNA]</scope>
    <source>
        <strain>cv. Columbia</strain>
    </source>
</reference>
<reference key="4">
    <citation type="submission" date="2005-03" db="EMBL/GenBank/DDBJ databases">
        <title>Large-scale analysis of RIKEN Arabidopsis full-length (RAFL) cDNAs.</title>
        <authorList>
            <person name="Totoki Y."/>
            <person name="Seki M."/>
            <person name="Ishida J."/>
            <person name="Nakajima M."/>
            <person name="Enju A."/>
            <person name="Kamiya A."/>
            <person name="Narusaka M."/>
            <person name="Shin-i T."/>
            <person name="Nakagawa M."/>
            <person name="Sakamoto N."/>
            <person name="Oishi K."/>
            <person name="Kohara Y."/>
            <person name="Kobayashi M."/>
            <person name="Toyoda A."/>
            <person name="Sakaki Y."/>
            <person name="Sakurai T."/>
            <person name="Iida K."/>
            <person name="Akiyama K."/>
            <person name="Satou M."/>
            <person name="Toyoda T."/>
            <person name="Konagaya A."/>
            <person name="Carninci P."/>
            <person name="Kawai J."/>
            <person name="Hayashizaki Y."/>
            <person name="Shinozaki K."/>
        </authorList>
    </citation>
    <scope>NUCLEOTIDE SEQUENCE [LARGE SCALE MRNA]</scope>
    <source>
        <strain>cv. Columbia</strain>
    </source>
</reference>
<reference key="5">
    <citation type="journal article" date="2008" name="J. Biol. Chem.">
        <title>A novel pathway of cytochrome c biogenesis is involved in the assembly of the cytochrome b6f complex in arabidopsis chloroplasts.</title>
        <authorList>
            <person name="Lezhneva L."/>
            <person name="Kuras R."/>
            <person name="Ephritikhine G."/>
            <person name="de Vitry C."/>
        </authorList>
    </citation>
    <scope>FUNCTION</scope>
    <scope>SUBCELLULAR LOCATION</scope>
    <scope>TOPOLOGY</scope>
    <scope>DISRUPTION PHENOTYPE</scope>
</reference>
<dbReference type="EMBL" id="AC007258">
    <property type="protein sequence ID" value="AAD39336.1"/>
    <property type="status" value="ALT_SEQ"/>
    <property type="molecule type" value="Genomic_DNA"/>
</dbReference>
<dbReference type="EMBL" id="CP002684">
    <property type="protein sequence ID" value="AEE33626.1"/>
    <property type="molecule type" value="Genomic_DNA"/>
</dbReference>
<dbReference type="EMBL" id="CP002684">
    <property type="protein sequence ID" value="AEE33627.1"/>
    <property type="molecule type" value="Genomic_DNA"/>
</dbReference>
<dbReference type="EMBL" id="BT010443">
    <property type="protein sequence ID" value="AAQ62444.1"/>
    <property type="molecule type" value="mRNA"/>
</dbReference>
<dbReference type="EMBL" id="AK175262">
    <property type="protein sequence ID" value="BAD43025.1"/>
    <property type="molecule type" value="mRNA"/>
</dbReference>
<dbReference type="EMBL" id="AK175368">
    <property type="protein sequence ID" value="BAD43131.1"/>
    <property type="molecule type" value="mRNA"/>
</dbReference>
<dbReference type="EMBL" id="AK221539">
    <property type="protein sequence ID" value="BAD94887.1"/>
    <property type="molecule type" value="mRNA"/>
</dbReference>
<dbReference type="PIR" id="E96622">
    <property type="entry name" value="E96622"/>
</dbReference>
<dbReference type="RefSeq" id="NP_176193.2">
    <property type="nucleotide sequence ID" value="NM_104677.5"/>
</dbReference>
<dbReference type="RefSeq" id="NP_974051.1">
    <property type="nucleotide sequence ID" value="NM_202322.2"/>
</dbReference>
<dbReference type="SMR" id="Q6NQK9"/>
<dbReference type="FunCoup" id="Q6NQK9">
    <property type="interactions" value="993"/>
</dbReference>
<dbReference type="IntAct" id="Q6NQK9">
    <property type="interactions" value="1"/>
</dbReference>
<dbReference type="STRING" id="3702.Q6NQK9"/>
<dbReference type="PaxDb" id="3702-AT1G59840.2"/>
<dbReference type="ProteomicsDB" id="222805"/>
<dbReference type="EnsemblPlants" id="AT1G59840.1">
    <property type="protein sequence ID" value="AT1G59840.1"/>
    <property type="gene ID" value="AT1G59840"/>
</dbReference>
<dbReference type="EnsemblPlants" id="AT1G59840.2">
    <property type="protein sequence ID" value="AT1G59840.2"/>
    <property type="gene ID" value="AT1G59840"/>
</dbReference>
<dbReference type="GeneID" id="842278"/>
<dbReference type="Gramene" id="AT1G59840.1">
    <property type="protein sequence ID" value="AT1G59840.1"/>
    <property type="gene ID" value="AT1G59840"/>
</dbReference>
<dbReference type="Gramene" id="AT1G59840.2">
    <property type="protein sequence ID" value="AT1G59840.2"/>
    <property type="gene ID" value="AT1G59840"/>
</dbReference>
<dbReference type="KEGG" id="ath:AT1G59840"/>
<dbReference type="Araport" id="AT1G59840"/>
<dbReference type="TAIR" id="AT1G59840">
    <property type="gene designation" value="CCB4"/>
</dbReference>
<dbReference type="eggNOG" id="ENOG502QSXP">
    <property type="taxonomic scope" value="Eukaryota"/>
</dbReference>
<dbReference type="HOGENOM" id="CLU_082867_1_0_1"/>
<dbReference type="InParanoid" id="Q6NQK9"/>
<dbReference type="OMA" id="QGVICQP"/>
<dbReference type="PhylomeDB" id="Q6NQK9"/>
<dbReference type="PRO" id="PR:Q6NQK9"/>
<dbReference type="Proteomes" id="UP000006548">
    <property type="component" value="Chromosome 1"/>
</dbReference>
<dbReference type="ExpressionAtlas" id="Q6NQK9">
    <property type="expression patterns" value="baseline and differential"/>
</dbReference>
<dbReference type="GO" id="GO:0009507">
    <property type="term" value="C:chloroplast"/>
    <property type="evidence" value="ECO:0000314"/>
    <property type="project" value="TAIR"/>
</dbReference>
<dbReference type="GO" id="GO:0009535">
    <property type="term" value="C:chloroplast thylakoid membrane"/>
    <property type="evidence" value="ECO:0007669"/>
    <property type="project" value="UniProtKB-SubCell"/>
</dbReference>
<dbReference type="GO" id="GO:0010190">
    <property type="term" value="P:cytochrome b6f complex assembly"/>
    <property type="evidence" value="ECO:0000315"/>
    <property type="project" value="TAIR"/>
</dbReference>
<dbReference type="InterPro" id="IPR021325">
    <property type="entry name" value="CCB2/CCB4"/>
</dbReference>
<dbReference type="InterPro" id="IPR044705">
    <property type="entry name" value="CCB4"/>
</dbReference>
<dbReference type="PANTHER" id="PTHR34943">
    <property type="match status" value="1"/>
</dbReference>
<dbReference type="PANTHER" id="PTHR34943:SF2">
    <property type="entry name" value="PROTEIN COFACTOR ASSEMBLY OF COMPLEX C SUBUNIT B CCB4, CHLOROPLASTIC"/>
    <property type="match status" value="1"/>
</dbReference>
<dbReference type="Pfam" id="PF11152">
    <property type="entry name" value="CCB2_CCB4"/>
    <property type="match status" value="1"/>
</dbReference>
<feature type="transit peptide" description="Chloroplast" evidence="4">
    <location>
        <begin position="1"/>
        <end position="33"/>
    </location>
</feature>
<feature type="chain" id="PRO_0000433264" description="Protein COFACTOR ASSEMBLY OF COMPLEX C SUBUNIT B CCB4, chloroplastic" evidence="1">
    <location>
        <begin position="34"/>
        <end position="297"/>
    </location>
</feature>
<feature type="topological domain" description="Stromal" evidence="5">
    <location>
        <begin position="34"/>
        <end position="70"/>
    </location>
</feature>
<feature type="transmembrane region" description="Helical" evidence="1">
    <location>
        <begin position="71"/>
        <end position="91"/>
    </location>
</feature>
<feature type="topological domain" description="Lumenal" evidence="5">
    <location>
        <begin position="92"/>
        <end position="103"/>
    </location>
</feature>
<feature type="transmembrane region" description="Helical" evidence="1">
    <location>
        <begin position="104"/>
        <end position="124"/>
    </location>
</feature>
<feature type="topological domain" description="Stromal" evidence="5">
    <location>
        <begin position="125"/>
        <end position="297"/>
    </location>
</feature>
<protein>
    <recommendedName>
        <fullName evidence="4">Protein COFACTOR ASSEMBLY OF COMPLEX C SUBUNIT B CCB4, chloroplastic</fullName>
    </recommendedName>
</protein>